<feature type="signal peptide" evidence="1">
    <location>
        <begin position="1"/>
        <end position="23"/>
    </location>
</feature>
<feature type="chain" id="PRO_0000041810" description="Flagellar P-ring protein 1">
    <location>
        <begin position="24"/>
        <end position="369"/>
    </location>
</feature>
<name>FLGI1_YERPS</name>
<evidence type="ECO:0000255" key="1">
    <source>
        <dbReference type="HAMAP-Rule" id="MF_00416"/>
    </source>
</evidence>
<protein>
    <recommendedName>
        <fullName evidence="1">Flagellar P-ring protein 1</fullName>
    </recommendedName>
    <alternativeName>
        <fullName evidence="1">Basal body P-ring protein 1</fullName>
    </alternativeName>
</protein>
<dbReference type="EMBL" id="BX936398">
    <property type="protein sequence ID" value="CAH20918.1"/>
    <property type="molecule type" value="Genomic_DNA"/>
</dbReference>
<dbReference type="RefSeq" id="WP_002211117.1">
    <property type="nucleotide sequence ID" value="NC_006155.1"/>
</dbReference>
<dbReference type="SMR" id="Q66BT8"/>
<dbReference type="KEGG" id="yps:YPTB1679"/>
<dbReference type="Proteomes" id="UP000001011">
    <property type="component" value="Chromosome"/>
</dbReference>
<dbReference type="GO" id="GO:0009428">
    <property type="term" value="C:bacterial-type flagellum basal body, distal rod, P ring"/>
    <property type="evidence" value="ECO:0007669"/>
    <property type="project" value="InterPro"/>
</dbReference>
<dbReference type="GO" id="GO:0030288">
    <property type="term" value="C:outer membrane-bounded periplasmic space"/>
    <property type="evidence" value="ECO:0007669"/>
    <property type="project" value="InterPro"/>
</dbReference>
<dbReference type="GO" id="GO:0005198">
    <property type="term" value="F:structural molecule activity"/>
    <property type="evidence" value="ECO:0007669"/>
    <property type="project" value="InterPro"/>
</dbReference>
<dbReference type="GO" id="GO:0071973">
    <property type="term" value="P:bacterial-type flagellum-dependent cell motility"/>
    <property type="evidence" value="ECO:0007669"/>
    <property type="project" value="InterPro"/>
</dbReference>
<dbReference type="HAMAP" id="MF_00416">
    <property type="entry name" value="FlgI"/>
    <property type="match status" value="1"/>
</dbReference>
<dbReference type="InterPro" id="IPR001782">
    <property type="entry name" value="Flag_FlgI"/>
</dbReference>
<dbReference type="NCBIfam" id="NF003676">
    <property type="entry name" value="PRK05303.1"/>
    <property type="match status" value="1"/>
</dbReference>
<dbReference type="PANTHER" id="PTHR30381">
    <property type="entry name" value="FLAGELLAR P-RING PERIPLASMIC PROTEIN FLGI"/>
    <property type="match status" value="1"/>
</dbReference>
<dbReference type="PANTHER" id="PTHR30381:SF0">
    <property type="entry name" value="FLAGELLAR P-RING PROTEIN"/>
    <property type="match status" value="1"/>
</dbReference>
<dbReference type="Pfam" id="PF02119">
    <property type="entry name" value="FlgI"/>
    <property type="match status" value="1"/>
</dbReference>
<dbReference type="PRINTS" id="PR01010">
    <property type="entry name" value="FLGPRINGFLGI"/>
</dbReference>
<comment type="function">
    <text evidence="1">Assembles around the rod to form the L-ring and probably protects the motor/basal body from shearing forces during rotation.</text>
</comment>
<comment type="subunit">
    <text evidence="1">The basal body constitutes a major portion of the flagellar organelle and consists of four rings (L,P,S, and M) mounted on a central rod.</text>
</comment>
<comment type="subcellular location">
    <subcellularLocation>
        <location evidence="1">Periplasm</location>
    </subcellularLocation>
    <subcellularLocation>
        <location evidence="1">Bacterial flagellum basal body</location>
    </subcellularLocation>
</comment>
<comment type="similarity">
    <text evidence="1">Belongs to the FlgI family.</text>
</comment>
<proteinExistence type="inferred from homology"/>
<gene>
    <name evidence="1" type="primary">flgI1</name>
    <name type="ordered locus">YPTB1679</name>
</gene>
<sequence length="369" mass="38464">MRKQSLVTLLMVLLSLVWLPASAERIRDLVTVQGVRDNALIGYGLVVGLDGSGDQTMQTPFTTQSLSNMLSQLGITVPPGTNMQLKNVAAVMVTAKLPAFSRAGQTIDVVVSSMGNAKSIRGGTLLMTPLKGVDNQVYALAQGNVLVGGAGAAAGGSSVQVNQLAGGRISNGATIERELPTTFGTDGIINLQLNSEDFTLAQQVSDAINRQRGFGSATAIDARTIQVLVPRGGSSQVRFLADIQNIPINVDPGDAKVIINSRTGSVVMNRNVVLDSCAVAQGNLSVVVDKQNIVSQPDTPFGGGQTVVTPNTQISVQQQGGVLQRVNASPNLNNVVRALNSLGATPIDLMSILQAMESAGCLRAKLEII</sequence>
<accession>Q66BT8</accession>
<organism>
    <name type="scientific">Yersinia pseudotuberculosis serotype I (strain IP32953)</name>
    <dbReference type="NCBI Taxonomy" id="273123"/>
    <lineage>
        <taxon>Bacteria</taxon>
        <taxon>Pseudomonadati</taxon>
        <taxon>Pseudomonadota</taxon>
        <taxon>Gammaproteobacteria</taxon>
        <taxon>Enterobacterales</taxon>
        <taxon>Yersiniaceae</taxon>
        <taxon>Yersinia</taxon>
    </lineage>
</organism>
<reference key="1">
    <citation type="journal article" date="2004" name="Proc. Natl. Acad. Sci. U.S.A.">
        <title>Insights into the evolution of Yersinia pestis through whole-genome comparison with Yersinia pseudotuberculosis.</title>
        <authorList>
            <person name="Chain P.S.G."/>
            <person name="Carniel E."/>
            <person name="Larimer F.W."/>
            <person name="Lamerdin J."/>
            <person name="Stoutland P.O."/>
            <person name="Regala W.M."/>
            <person name="Georgescu A.M."/>
            <person name="Vergez L.M."/>
            <person name="Land M.L."/>
            <person name="Motin V.L."/>
            <person name="Brubaker R.R."/>
            <person name="Fowler J."/>
            <person name="Hinnebusch J."/>
            <person name="Marceau M."/>
            <person name="Medigue C."/>
            <person name="Simonet M."/>
            <person name="Chenal-Francisque V."/>
            <person name="Souza B."/>
            <person name="Dacheux D."/>
            <person name="Elliott J.M."/>
            <person name="Derbise A."/>
            <person name="Hauser L.J."/>
            <person name="Garcia E."/>
        </authorList>
    </citation>
    <scope>NUCLEOTIDE SEQUENCE [LARGE SCALE GENOMIC DNA]</scope>
    <source>
        <strain>IP32953</strain>
    </source>
</reference>
<keyword id="KW-0975">Bacterial flagellum</keyword>
<keyword id="KW-0574">Periplasm</keyword>
<keyword id="KW-0732">Signal</keyword>